<sequence length="232" mass="24615">MQKNAAHTYAISSLLVLSLTGCAWIPSTPLVQGATSAQPVPGPTPVANGSIFQSAQPINYGYQPLFEDRRPRNIGDTLTIVLQENVSASKSSSANASRDGKTNFGFDTVPRYLQGLFGNARADVEASGGNTFNGKGGANASNTFSGTLTVTVDQVLVNGNLHVVGEKQIAINQGTEFIRFSGVVNPRTISGSNTVPSTQVADARIEYVGNGYINEAQNMGWLQRFFLNLSPM</sequence>
<organism>
    <name type="scientific">Escherichia coli O157:H7</name>
    <dbReference type="NCBI Taxonomy" id="83334"/>
    <lineage>
        <taxon>Bacteria</taxon>
        <taxon>Pseudomonadati</taxon>
        <taxon>Pseudomonadota</taxon>
        <taxon>Gammaproteobacteria</taxon>
        <taxon>Enterobacterales</taxon>
        <taxon>Enterobacteriaceae</taxon>
        <taxon>Escherichia</taxon>
    </lineage>
</organism>
<feature type="signal peptide" evidence="2">
    <location>
        <begin position="1"/>
        <end position="21"/>
    </location>
</feature>
<feature type="chain" id="PRO_0000009444" description="Flagellar L-ring protein">
    <location>
        <begin position="22"/>
        <end position="232"/>
    </location>
</feature>
<feature type="lipid moiety-binding region" description="N-palmitoyl cysteine" evidence="2">
    <location>
        <position position="22"/>
    </location>
</feature>
<feature type="lipid moiety-binding region" description="S-diacylglycerol cysteine" evidence="2">
    <location>
        <position position="22"/>
    </location>
</feature>
<comment type="function">
    <text evidence="1">Assembles around the rod to form the L-ring and probably protects the motor/basal body from shearing forces during rotation.</text>
</comment>
<comment type="subunit">
    <text evidence="1">The basal body constitutes a major portion of the flagellar organelle and consists of four rings (L,P,S, and M) mounted on a central rod.</text>
</comment>
<comment type="subcellular location">
    <subcellularLocation>
        <location evidence="1">Cell outer membrane</location>
        <topology evidence="1">Lipid-anchor</topology>
    </subcellularLocation>
    <subcellularLocation>
        <location evidence="1">Bacterial flagellum basal body</location>
    </subcellularLocation>
</comment>
<comment type="similarity">
    <text evidence="3">Belongs to the FlgH family.</text>
</comment>
<name>FLGH_ECO57</name>
<dbReference type="EMBL" id="AE005174">
    <property type="protein sequence ID" value="AAG55825.1"/>
    <property type="molecule type" value="Genomic_DNA"/>
</dbReference>
<dbReference type="EMBL" id="BA000007">
    <property type="protein sequence ID" value="BAB34880.1"/>
    <property type="molecule type" value="Genomic_DNA"/>
</dbReference>
<dbReference type="PIR" id="A99811">
    <property type="entry name" value="A99811"/>
</dbReference>
<dbReference type="PIR" id="E85670">
    <property type="entry name" value="E85670"/>
</dbReference>
<dbReference type="RefSeq" id="NP_309484.1">
    <property type="nucleotide sequence ID" value="NC_002695.1"/>
</dbReference>
<dbReference type="RefSeq" id="WP_001295442.1">
    <property type="nucleotide sequence ID" value="NZ_VOAI01000018.1"/>
</dbReference>
<dbReference type="SMR" id="P0A6S1"/>
<dbReference type="STRING" id="155864.Z1717"/>
<dbReference type="GeneID" id="912879"/>
<dbReference type="GeneID" id="93776328"/>
<dbReference type="KEGG" id="ece:Z1717"/>
<dbReference type="KEGG" id="ecs:ECs_1457"/>
<dbReference type="PATRIC" id="fig|386585.9.peg.1558"/>
<dbReference type="eggNOG" id="COG2063">
    <property type="taxonomic scope" value="Bacteria"/>
</dbReference>
<dbReference type="HOGENOM" id="CLU_069313_0_0_6"/>
<dbReference type="OMA" id="WFDRFFL"/>
<dbReference type="Proteomes" id="UP000000558">
    <property type="component" value="Chromosome"/>
</dbReference>
<dbReference type="Proteomes" id="UP000002519">
    <property type="component" value="Chromosome"/>
</dbReference>
<dbReference type="GO" id="GO:0009427">
    <property type="term" value="C:bacterial-type flagellum basal body, distal rod, L ring"/>
    <property type="evidence" value="ECO:0007669"/>
    <property type="project" value="InterPro"/>
</dbReference>
<dbReference type="GO" id="GO:0009279">
    <property type="term" value="C:cell outer membrane"/>
    <property type="evidence" value="ECO:0007669"/>
    <property type="project" value="UniProtKB-SubCell"/>
</dbReference>
<dbReference type="GO" id="GO:0003774">
    <property type="term" value="F:cytoskeletal motor activity"/>
    <property type="evidence" value="ECO:0007669"/>
    <property type="project" value="InterPro"/>
</dbReference>
<dbReference type="GO" id="GO:0071973">
    <property type="term" value="P:bacterial-type flagellum-dependent cell motility"/>
    <property type="evidence" value="ECO:0007669"/>
    <property type="project" value="InterPro"/>
</dbReference>
<dbReference type="HAMAP" id="MF_00415">
    <property type="entry name" value="FlgH"/>
    <property type="match status" value="1"/>
</dbReference>
<dbReference type="InterPro" id="IPR000527">
    <property type="entry name" value="Flag_Lring"/>
</dbReference>
<dbReference type="NCBIfam" id="NF001301">
    <property type="entry name" value="PRK00249.1-1"/>
    <property type="match status" value="1"/>
</dbReference>
<dbReference type="PANTHER" id="PTHR34933">
    <property type="entry name" value="FLAGELLAR L-RING PROTEIN"/>
    <property type="match status" value="1"/>
</dbReference>
<dbReference type="PANTHER" id="PTHR34933:SF3">
    <property type="entry name" value="FLAGELLAR L-RING PROTEIN"/>
    <property type="match status" value="1"/>
</dbReference>
<dbReference type="Pfam" id="PF02107">
    <property type="entry name" value="FlgH"/>
    <property type="match status" value="1"/>
</dbReference>
<dbReference type="PRINTS" id="PR01008">
    <property type="entry name" value="FLGLRINGFLGH"/>
</dbReference>
<dbReference type="PROSITE" id="PS51257">
    <property type="entry name" value="PROKAR_LIPOPROTEIN"/>
    <property type="match status" value="1"/>
</dbReference>
<keyword id="KW-0975">Bacterial flagellum</keyword>
<keyword id="KW-0998">Cell outer membrane</keyword>
<keyword id="KW-0449">Lipoprotein</keyword>
<keyword id="KW-0472">Membrane</keyword>
<keyword id="KW-0564">Palmitate</keyword>
<keyword id="KW-1185">Reference proteome</keyword>
<keyword id="KW-0732">Signal</keyword>
<protein>
    <recommendedName>
        <fullName>Flagellar L-ring protein</fullName>
    </recommendedName>
    <alternativeName>
        <fullName>Basal body L-ring protein</fullName>
    </alternativeName>
</protein>
<reference key="1">
    <citation type="journal article" date="2001" name="Nature">
        <title>Genome sequence of enterohaemorrhagic Escherichia coli O157:H7.</title>
        <authorList>
            <person name="Perna N.T."/>
            <person name="Plunkett G. III"/>
            <person name="Burland V."/>
            <person name="Mau B."/>
            <person name="Glasner J.D."/>
            <person name="Rose D.J."/>
            <person name="Mayhew G.F."/>
            <person name="Evans P.S."/>
            <person name="Gregor J."/>
            <person name="Kirkpatrick H.A."/>
            <person name="Posfai G."/>
            <person name="Hackett J."/>
            <person name="Klink S."/>
            <person name="Boutin A."/>
            <person name="Shao Y."/>
            <person name="Miller L."/>
            <person name="Grotbeck E.J."/>
            <person name="Davis N.W."/>
            <person name="Lim A."/>
            <person name="Dimalanta E.T."/>
            <person name="Potamousis K."/>
            <person name="Apodaca J."/>
            <person name="Anantharaman T.S."/>
            <person name="Lin J."/>
            <person name="Yen G."/>
            <person name="Schwartz D.C."/>
            <person name="Welch R.A."/>
            <person name="Blattner F.R."/>
        </authorList>
    </citation>
    <scope>NUCLEOTIDE SEQUENCE [LARGE SCALE GENOMIC DNA]</scope>
    <source>
        <strain>O157:H7 / EDL933 / ATCC 700927 / EHEC</strain>
    </source>
</reference>
<reference key="2">
    <citation type="journal article" date="2001" name="DNA Res.">
        <title>Complete genome sequence of enterohemorrhagic Escherichia coli O157:H7 and genomic comparison with a laboratory strain K-12.</title>
        <authorList>
            <person name="Hayashi T."/>
            <person name="Makino K."/>
            <person name="Ohnishi M."/>
            <person name="Kurokawa K."/>
            <person name="Ishii K."/>
            <person name="Yokoyama K."/>
            <person name="Han C.-G."/>
            <person name="Ohtsubo E."/>
            <person name="Nakayama K."/>
            <person name="Murata T."/>
            <person name="Tanaka M."/>
            <person name="Tobe T."/>
            <person name="Iida T."/>
            <person name="Takami H."/>
            <person name="Honda T."/>
            <person name="Sasakawa C."/>
            <person name="Ogasawara N."/>
            <person name="Yasunaga T."/>
            <person name="Kuhara S."/>
            <person name="Shiba T."/>
            <person name="Hattori M."/>
            <person name="Shinagawa H."/>
        </authorList>
    </citation>
    <scope>NUCLEOTIDE SEQUENCE [LARGE SCALE GENOMIC DNA]</scope>
    <source>
        <strain>O157:H7 / Sakai / RIMD 0509952 / EHEC</strain>
    </source>
</reference>
<proteinExistence type="inferred from homology"/>
<evidence type="ECO:0000250" key="1"/>
<evidence type="ECO:0000255" key="2"/>
<evidence type="ECO:0000305" key="3"/>
<gene>
    <name type="primary">flgH</name>
    <name type="ordered locus">Z1717</name>
    <name type="ordered locus">ECs1457</name>
</gene>
<accession>P0A6S1</accession>
<accession>P75940</accession>
<accession>Q9R7P0</accession>